<name>T13H_TAXCU</name>
<keyword id="KW-0349">Heme</keyword>
<keyword id="KW-0408">Iron</keyword>
<keyword id="KW-0479">Metal-binding</keyword>
<keyword id="KW-0503">Monooxygenase</keyword>
<keyword id="KW-0560">Oxidoreductase</keyword>
<keyword id="KW-0876">Taxol biosynthesis</keyword>
<comment type="function">
    <text evidence="2">Involved in the transformation of a taxadienyl acetate by hydroxylation at C13 to yield taxadien-5-alpha-acetoxy-13-alpha-ol.</text>
</comment>
<comment type="catalytic activity">
    <reaction evidence="2">
        <text>taxa-4(20),11-dien-5alpha-ol + reduced [NADPH--hemoprotein reductase] + O2 = taxa-4(20),11-dien-5alpha,13alpha-diol + oxidized [NADPH--hemoprotein reductase] + H2O + H(+)</text>
        <dbReference type="Rhea" id="RHEA:18949"/>
        <dbReference type="Rhea" id="RHEA-COMP:11964"/>
        <dbReference type="Rhea" id="RHEA-COMP:11965"/>
        <dbReference type="ChEBI" id="CHEBI:15377"/>
        <dbReference type="ChEBI" id="CHEBI:15378"/>
        <dbReference type="ChEBI" id="CHEBI:15379"/>
        <dbReference type="ChEBI" id="CHEBI:30038"/>
        <dbReference type="ChEBI" id="CHEBI:30041"/>
        <dbReference type="ChEBI" id="CHEBI:57618"/>
        <dbReference type="ChEBI" id="CHEBI:58210"/>
        <dbReference type="EC" id="1.14.14.106"/>
    </reaction>
</comment>
<comment type="cofactor">
    <cofactor evidence="1">
        <name>heme</name>
        <dbReference type="ChEBI" id="CHEBI:30413"/>
    </cofactor>
</comment>
<comment type="pathway">
    <text>Alkaloid biosynthesis; taxol biosynthesis.</text>
</comment>
<comment type="similarity">
    <text evidence="3">Belongs to the cytochrome P450 family.</text>
</comment>
<dbReference type="EC" id="1.14.14.106" evidence="2"/>
<dbReference type="EMBL" id="AY056019">
    <property type="protein sequence ID" value="AAL23619.1"/>
    <property type="molecule type" value="mRNA"/>
</dbReference>
<dbReference type="SMR" id="Q8W4T9"/>
<dbReference type="KEGG" id="ag:AAL23619"/>
<dbReference type="BioCyc" id="MetaCyc:MONOMER-13398"/>
<dbReference type="BRENDA" id="1.14.14.106">
    <property type="organism ID" value="6225"/>
</dbReference>
<dbReference type="UniPathway" id="UPA00842"/>
<dbReference type="GO" id="GO:0020037">
    <property type="term" value="F:heme binding"/>
    <property type="evidence" value="ECO:0007669"/>
    <property type="project" value="InterPro"/>
</dbReference>
<dbReference type="GO" id="GO:0005506">
    <property type="term" value="F:iron ion binding"/>
    <property type="evidence" value="ECO:0007669"/>
    <property type="project" value="InterPro"/>
</dbReference>
<dbReference type="GO" id="GO:0050598">
    <property type="term" value="F:taxane 13-alpha-hydroxylase activity"/>
    <property type="evidence" value="ECO:0007669"/>
    <property type="project" value="UniProtKB-EC"/>
</dbReference>
<dbReference type="GO" id="GO:0042617">
    <property type="term" value="P:paclitaxel biosynthetic process"/>
    <property type="evidence" value="ECO:0007669"/>
    <property type="project" value="UniProtKB-UniPathway"/>
</dbReference>
<dbReference type="GO" id="GO:0016125">
    <property type="term" value="P:sterol metabolic process"/>
    <property type="evidence" value="ECO:0007669"/>
    <property type="project" value="TreeGrafter"/>
</dbReference>
<dbReference type="CDD" id="cd11043">
    <property type="entry name" value="CYP90-like"/>
    <property type="match status" value="1"/>
</dbReference>
<dbReference type="FunFam" id="1.10.630.10:FF:000022">
    <property type="entry name" value="Taxadiene 5-alpha hydroxylase"/>
    <property type="match status" value="1"/>
</dbReference>
<dbReference type="Gene3D" id="1.10.630.10">
    <property type="entry name" value="Cytochrome P450"/>
    <property type="match status" value="1"/>
</dbReference>
<dbReference type="InterPro" id="IPR001128">
    <property type="entry name" value="Cyt_P450"/>
</dbReference>
<dbReference type="InterPro" id="IPR017972">
    <property type="entry name" value="Cyt_P450_CS"/>
</dbReference>
<dbReference type="InterPro" id="IPR002401">
    <property type="entry name" value="Cyt_P450_E_grp-I"/>
</dbReference>
<dbReference type="InterPro" id="IPR036396">
    <property type="entry name" value="Cyt_P450_sf"/>
</dbReference>
<dbReference type="PANTHER" id="PTHR24286">
    <property type="entry name" value="CYTOCHROME P450 26"/>
    <property type="match status" value="1"/>
</dbReference>
<dbReference type="PANTHER" id="PTHR24286:SF384">
    <property type="entry name" value="P450, PUTATIVE (EUROFUNG)-RELATED"/>
    <property type="match status" value="1"/>
</dbReference>
<dbReference type="Pfam" id="PF00067">
    <property type="entry name" value="p450"/>
    <property type="match status" value="1"/>
</dbReference>
<dbReference type="PRINTS" id="PR00463">
    <property type="entry name" value="EP450I"/>
</dbReference>
<dbReference type="PRINTS" id="PR00385">
    <property type="entry name" value="P450"/>
</dbReference>
<dbReference type="SUPFAM" id="SSF48264">
    <property type="entry name" value="Cytochrome P450"/>
    <property type="match status" value="1"/>
</dbReference>
<dbReference type="PROSITE" id="PS00086">
    <property type="entry name" value="CYTOCHROME_P450"/>
    <property type="match status" value="1"/>
</dbReference>
<protein>
    <recommendedName>
        <fullName>Taxane 13-alpha-hydroxylase</fullName>
        <ecNumber evidence="2">1.14.14.106</ecNumber>
    </recommendedName>
    <alternativeName>
        <fullName>Cytochrome P450 725A2</fullName>
    </alternativeName>
</protein>
<organism>
    <name type="scientific">Taxus cuspidata</name>
    <name type="common">Japanese yew</name>
    <dbReference type="NCBI Taxonomy" id="99806"/>
    <lineage>
        <taxon>Eukaryota</taxon>
        <taxon>Viridiplantae</taxon>
        <taxon>Streptophyta</taxon>
        <taxon>Embryophyta</taxon>
        <taxon>Tracheophyta</taxon>
        <taxon>Spermatophyta</taxon>
        <taxon>Pinopsida</taxon>
        <taxon>Pinidae</taxon>
        <taxon>Conifers II</taxon>
        <taxon>Cupressales</taxon>
        <taxon>Taxaceae</taxon>
        <taxon>Taxus</taxon>
    </lineage>
</organism>
<reference key="1">
    <citation type="journal article" date="2001" name="Proc. Natl. Acad. Sci. U.S.A.">
        <title>Taxol biosynthesis: taxane 13alpha-hydroxylase is a cytochrome P450-dependent monooxygenase.</title>
        <authorList>
            <person name="Jennewein S."/>
            <person name="Rithner C.D."/>
            <person name="Williams R.M."/>
            <person name="Croteau R.B."/>
        </authorList>
    </citation>
    <scope>NUCLEOTIDE SEQUENCE [MRNA]</scope>
    <scope>FUNCTION</scope>
    <scope>CATALYTIC ACTIVITY</scope>
    <scope>CHARACTERIZATION</scope>
</reference>
<evidence type="ECO:0000250" key="1"/>
<evidence type="ECO:0000269" key="2">
    <source>
    </source>
</evidence>
<evidence type="ECO:0000305" key="3"/>
<feature type="chain" id="PRO_0000052203" description="Taxane 13-alpha-hydroxylase">
    <location>
        <begin position="1"/>
        <end position="485"/>
    </location>
</feature>
<feature type="binding site" description="axial binding residue" evidence="1">
    <location>
        <position position="431"/>
    </location>
    <ligand>
        <name>heme</name>
        <dbReference type="ChEBI" id="CHEBI:30413"/>
    </ligand>
    <ligandPart>
        <name>Fe</name>
        <dbReference type="ChEBI" id="CHEBI:18248"/>
    </ligandPart>
</feature>
<accession>Q8W4T9</accession>
<proteinExistence type="evidence at protein level"/>
<gene>
    <name type="primary">CYP725A2</name>
</gene>
<sequence length="485" mass="54653">MDALKQLEVSPSILFVTLAVMAGIILFFRSKRHSSVKLPPGNLGFPLVGETLQFVRSLGSSTPQQFIEERMSKFGDVFKTSIIGHPTVVLCGPAGNRLVLSNENKLVQMSWPSSMMKLIGEDCLGGKTGEQHRIVRAALTRFLGPQALQNHFAKMSSGIQRHINEKWKGKDEATVLPLVKDLVFSVASRLFFGITEEHLQEQLHNLLEVILVGSFSVPLNIPGFSYHKAIQARATLADIMTHLIEKRRNELRAGTASENQDLLSVLLTFTDERGNSLADKEILDNFSMLLHGSYDSTNSPLTMLIKVLASHPESYEKVAQEQFGILSTKMEGEEIAWKDLKEMKYSWQVVQETLRMYPPIFGTFRKAITDIHYNGYTIPKGWKLLWTTYSTQTKEEYFKDADQFKPSRFEEEGKHVTPYTYLPFGGGMRVCPGWEFAKMETLLFLHHFVKAFSGLKAIDPNEKLSGKPLPPLPVNGLPIKLYSRS</sequence>